<reference key="1">
    <citation type="submission" date="2004-05" db="EMBL/GenBank/DDBJ databases">
        <title>Cloning of rhesus monkey cytochrome P450 1A1 (CYP1A1).</title>
        <authorList>
            <person name="Carr B.A."/>
            <person name="Fang Y."/>
            <person name="Rushmore T.H."/>
        </authorList>
    </citation>
    <scope>NUCLEOTIDE SEQUENCE [MRNA]</scope>
</reference>
<name>CP1A1_MACMU</name>
<gene>
    <name type="primary">CYP1A1</name>
</gene>
<feature type="chain" id="PRO_0000051629" description="Cytochrome P450 1A1">
    <location>
        <begin position="1"/>
        <end position="512"/>
    </location>
</feature>
<feature type="region of interest" description="Mitochondrial targeting signal" evidence="2">
    <location>
        <begin position="29"/>
        <end position="40"/>
    </location>
</feature>
<feature type="binding site" evidence="1">
    <location>
        <position position="224"/>
    </location>
    <ligand>
        <name>substrate</name>
    </ligand>
</feature>
<feature type="binding site" description="axial binding residue" evidence="1">
    <location>
        <position position="457"/>
    </location>
    <ligand>
        <name>heme</name>
        <dbReference type="ChEBI" id="CHEBI:30413"/>
    </ligand>
    <ligandPart>
        <name>Fe</name>
        <dbReference type="ChEBI" id="CHEBI:18248"/>
    </ligandPart>
</feature>
<feature type="glycosylation site" description="O-linked (GlcNAc) serine" evidence="1">
    <location>
        <position position="67"/>
    </location>
</feature>
<protein>
    <recommendedName>
        <fullName>Cytochrome P450 1A1</fullName>
        <ecNumber evidence="3">1.14.14.1</ecNumber>
    </recommendedName>
    <alternativeName>
        <fullName>CYPIA1</fullName>
    </alternativeName>
    <alternativeName>
        <fullName>Cytochrome P450 form 6</fullName>
    </alternativeName>
    <alternativeName>
        <fullName>Cytochrome P450-C</fullName>
    </alternativeName>
    <alternativeName>
        <fullName>Cytochrome P450-P1</fullName>
    </alternativeName>
    <alternativeName>
        <fullName>Hydroperoxy icosatetraenoate dehydratase</fullName>
        <ecNumber evidence="3">4.2.1.152</ecNumber>
    </alternativeName>
</protein>
<dbReference type="EC" id="1.14.14.1" evidence="3"/>
<dbReference type="EC" id="4.2.1.152" evidence="3"/>
<dbReference type="EMBL" id="AY635458">
    <property type="protein sequence ID" value="AAT49262.1"/>
    <property type="molecule type" value="mRNA"/>
</dbReference>
<dbReference type="RefSeq" id="NP_001035328.1">
    <property type="nucleotide sequence ID" value="NM_001040238.1"/>
</dbReference>
<dbReference type="RefSeq" id="XP_014998188.1">
    <property type="nucleotide sequence ID" value="XM_015142702.1"/>
</dbReference>
<dbReference type="RefSeq" id="XP_014998189.1">
    <property type="nucleotide sequence ID" value="XM_015142703.1"/>
</dbReference>
<dbReference type="SMR" id="Q6GUR1"/>
<dbReference type="FunCoup" id="Q6GUR1">
    <property type="interactions" value="421"/>
</dbReference>
<dbReference type="STRING" id="9544.ENSMMUP00000029575"/>
<dbReference type="GlyCosmos" id="Q6GUR1">
    <property type="glycosylation" value="1 site, No reported glycans"/>
</dbReference>
<dbReference type="PaxDb" id="9544-ENSMMUP00000029575"/>
<dbReference type="GeneID" id="678694"/>
<dbReference type="KEGG" id="mcc:678694"/>
<dbReference type="CTD" id="1543"/>
<dbReference type="eggNOG" id="KOG0156">
    <property type="taxonomic scope" value="Eukaryota"/>
</dbReference>
<dbReference type="InParanoid" id="Q6GUR1"/>
<dbReference type="OrthoDB" id="1055148at2759"/>
<dbReference type="TreeFam" id="TF105095"/>
<dbReference type="UniPathway" id="UPA00199"/>
<dbReference type="UniPathway" id="UPA00912"/>
<dbReference type="Proteomes" id="UP000006718">
    <property type="component" value="Unassembled WGS sequence"/>
</dbReference>
<dbReference type="GO" id="GO:0005789">
    <property type="term" value="C:endoplasmic reticulum membrane"/>
    <property type="evidence" value="ECO:0007669"/>
    <property type="project" value="UniProtKB-SubCell"/>
</dbReference>
<dbReference type="GO" id="GO:0043231">
    <property type="term" value="C:intracellular membrane-bounded organelle"/>
    <property type="evidence" value="ECO:0000318"/>
    <property type="project" value="GO_Central"/>
</dbReference>
<dbReference type="GO" id="GO:0005743">
    <property type="term" value="C:mitochondrial inner membrane"/>
    <property type="evidence" value="ECO:0000250"/>
    <property type="project" value="UniProtKB"/>
</dbReference>
<dbReference type="GO" id="GO:0101020">
    <property type="term" value="F:estrogen 16-alpha-hydroxylase activity"/>
    <property type="evidence" value="ECO:0000250"/>
    <property type="project" value="UniProtKB"/>
</dbReference>
<dbReference type="GO" id="GO:0101021">
    <property type="term" value="F:estrogen 2-hydroxylase activity"/>
    <property type="evidence" value="ECO:0000250"/>
    <property type="project" value="UniProtKB"/>
</dbReference>
<dbReference type="GO" id="GO:0020037">
    <property type="term" value="F:heme binding"/>
    <property type="evidence" value="ECO:0007669"/>
    <property type="project" value="InterPro"/>
</dbReference>
<dbReference type="GO" id="GO:0030544">
    <property type="term" value="F:Hsp70 protein binding"/>
    <property type="evidence" value="ECO:0000250"/>
    <property type="project" value="UniProtKB"/>
</dbReference>
<dbReference type="GO" id="GO:0051879">
    <property type="term" value="F:Hsp90 protein binding"/>
    <property type="evidence" value="ECO:0000250"/>
    <property type="project" value="UniProtKB"/>
</dbReference>
<dbReference type="GO" id="GO:0106256">
    <property type="term" value="F:hydroperoxy icosatetraenoate dehydratase activity"/>
    <property type="evidence" value="ECO:0007669"/>
    <property type="project" value="UniProtKB-EC"/>
</dbReference>
<dbReference type="GO" id="GO:0005506">
    <property type="term" value="F:iron ion binding"/>
    <property type="evidence" value="ECO:0007669"/>
    <property type="project" value="InterPro"/>
</dbReference>
<dbReference type="GO" id="GO:0004497">
    <property type="term" value="F:monooxygenase activity"/>
    <property type="evidence" value="ECO:0000318"/>
    <property type="project" value="GO_Central"/>
</dbReference>
<dbReference type="GO" id="GO:0008210">
    <property type="term" value="P:estrogen metabolic process"/>
    <property type="evidence" value="ECO:0000250"/>
    <property type="project" value="UniProtKB"/>
</dbReference>
<dbReference type="GO" id="GO:0006631">
    <property type="term" value="P:fatty acid metabolic process"/>
    <property type="evidence" value="ECO:0007669"/>
    <property type="project" value="UniProtKB-UniPathway"/>
</dbReference>
<dbReference type="GO" id="GO:0042572">
    <property type="term" value="P:retinol metabolic process"/>
    <property type="evidence" value="ECO:0000250"/>
    <property type="project" value="UniProtKB"/>
</dbReference>
<dbReference type="GO" id="GO:0006694">
    <property type="term" value="P:steroid biosynthetic process"/>
    <property type="evidence" value="ECO:0007669"/>
    <property type="project" value="UniProtKB-KW"/>
</dbReference>
<dbReference type="CDD" id="cd20676">
    <property type="entry name" value="CYP1A"/>
    <property type="match status" value="1"/>
</dbReference>
<dbReference type="FunFam" id="1.10.630.10:FF:000002">
    <property type="entry name" value="Cytochrome P450 1A1"/>
    <property type="match status" value="1"/>
</dbReference>
<dbReference type="Gene3D" id="1.10.630.10">
    <property type="entry name" value="Cytochrome P450"/>
    <property type="match status" value="1"/>
</dbReference>
<dbReference type="InterPro" id="IPR001128">
    <property type="entry name" value="Cyt_P450"/>
</dbReference>
<dbReference type="InterPro" id="IPR017972">
    <property type="entry name" value="Cyt_P450_CS"/>
</dbReference>
<dbReference type="InterPro" id="IPR002401">
    <property type="entry name" value="Cyt_P450_E_grp-I"/>
</dbReference>
<dbReference type="InterPro" id="IPR008066">
    <property type="entry name" value="Cyt_P450_E_grp-I_CYP1"/>
</dbReference>
<dbReference type="InterPro" id="IPR036396">
    <property type="entry name" value="Cyt_P450_sf"/>
</dbReference>
<dbReference type="PANTHER" id="PTHR24289:SF21">
    <property type="entry name" value="CYTOCHROME P450 1A"/>
    <property type="match status" value="1"/>
</dbReference>
<dbReference type="PANTHER" id="PTHR24289">
    <property type="entry name" value="STEROID 17-ALPHA-HYDROXYLASE/17,20 LYASE"/>
    <property type="match status" value="1"/>
</dbReference>
<dbReference type="Pfam" id="PF00067">
    <property type="entry name" value="p450"/>
    <property type="match status" value="1"/>
</dbReference>
<dbReference type="PRINTS" id="PR00463">
    <property type="entry name" value="EP450I"/>
</dbReference>
<dbReference type="PRINTS" id="PR01683">
    <property type="entry name" value="EP450ICYP1A"/>
</dbReference>
<dbReference type="PRINTS" id="PR00385">
    <property type="entry name" value="P450"/>
</dbReference>
<dbReference type="SUPFAM" id="SSF48264">
    <property type="entry name" value="Cytochrome P450"/>
    <property type="match status" value="1"/>
</dbReference>
<dbReference type="PROSITE" id="PS00086">
    <property type="entry name" value="CYTOCHROME_P450"/>
    <property type="match status" value="1"/>
</dbReference>
<proteinExistence type="evidence at transcript level"/>
<keyword id="KW-0963">Cytoplasm</keyword>
<keyword id="KW-0256">Endoplasmic reticulum</keyword>
<keyword id="KW-0325">Glycoprotein</keyword>
<keyword id="KW-0349">Heme</keyword>
<keyword id="KW-0408">Iron</keyword>
<keyword id="KW-0444">Lipid biosynthesis</keyword>
<keyword id="KW-0443">Lipid metabolism</keyword>
<keyword id="KW-0456">Lyase</keyword>
<keyword id="KW-0472">Membrane</keyword>
<keyword id="KW-0479">Metal-binding</keyword>
<keyword id="KW-0492">Microsome</keyword>
<keyword id="KW-0496">Mitochondrion</keyword>
<keyword id="KW-0999">Mitochondrion inner membrane</keyword>
<keyword id="KW-0503">Monooxygenase</keyword>
<keyword id="KW-0560">Oxidoreductase</keyword>
<keyword id="KW-1185">Reference proteome</keyword>
<keyword id="KW-0752">Steroid biosynthesis</keyword>
<accession>Q6GUR1</accession>
<evidence type="ECO:0000250" key="1"/>
<evidence type="ECO:0000250" key="2">
    <source>
        <dbReference type="UniProtKB" id="P00185"/>
    </source>
</evidence>
<evidence type="ECO:0000250" key="3">
    <source>
        <dbReference type="UniProtKB" id="P04798"/>
    </source>
</evidence>
<evidence type="ECO:0000305" key="4"/>
<sequence length="512" mass="58129">MLFRISMSATEFLLASLIFCLVFWVIRASRPRVPKGLKNPPGPWGWPLIGHILTLGKNPHLALSRMSQRYGDVLQIRIGSTPVLVLSGLDTIRQALVQQGDDFKGRPNLYSFTLISNGQSMSFGPDSGPVWAARRRLAQNGLKSFSIASDPASSSSCYLEEHVSKEAEVLISKLQEQMAGPGHFNPYRYVVISVANVICAICFGQRYDHNHQELLSLVNLSNNFGEVVGSGNPADFIPILRYLPNRSLNGFKDLNEKFHSFMQKMIKEHYKTFEKGHIRDITDSLIEHCQEKQLDENANIQLSDEKIVNVVLDLFGAGFDTVTTAISWSLMYLVTNPRVQRKIQEELDTVIGRSRRPRLSDRSHLPYMEAFILETFRHSSFVPFTIPHSTTRDTSLKGFYIPKGRCVFVNQWQINHDQKLWVNPSEFLPERFITPDGAIDKVLSEKVILFGLGKRKCIGETIARWEVFLFLAILLQRVEFSVPPGVKVDMTPIYGLTMKHACCEHFQMQLRS</sequence>
<organism>
    <name type="scientific">Macaca mulatta</name>
    <name type="common">Rhesus macaque</name>
    <dbReference type="NCBI Taxonomy" id="9544"/>
    <lineage>
        <taxon>Eukaryota</taxon>
        <taxon>Metazoa</taxon>
        <taxon>Chordata</taxon>
        <taxon>Craniata</taxon>
        <taxon>Vertebrata</taxon>
        <taxon>Euteleostomi</taxon>
        <taxon>Mammalia</taxon>
        <taxon>Eutheria</taxon>
        <taxon>Euarchontoglires</taxon>
        <taxon>Primates</taxon>
        <taxon>Haplorrhini</taxon>
        <taxon>Catarrhini</taxon>
        <taxon>Cercopithecidae</taxon>
        <taxon>Cercopithecinae</taxon>
        <taxon>Macaca</taxon>
    </lineage>
</organism>
<comment type="function">
    <text evidence="3">A cytochrome P450 monooxygenase involved in the metabolism of various endogenous substrates, including fatty acids, steroid hormones and vitamins. Mechanistically, uses molecular oxygen inserting one oxygen atom into a substrate, and reducing the second into a water molecule, with two electrons provided by NADPH via cytochrome P450 reductase (CPR; NADPH-ferrihemoprotein reductase). Catalyzes the hydroxylation of carbon-hydrogen bonds. Exhibits high catalytic activity for the formation of hydroxyestrogens from estrone (E1) and 17beta-estradiol (E2), namely 2-hydroxy E1 and E2, as well as D-ring hydroxylated E1 and E2 at the C15alpha and C16alpha positions. Displays different regioselectivities for polyunsaturated fatty acids (PUFA) hydroxylation. Catalyzes the epoxidation of double bonds of certain PUFA. Converts arachidonic acid toward epoxyeicosatrienoic acid (EET) regioisomers, 8,9-, 11,12-, and 14,15-EET, that function as lipid mediators in the vascular system. Displays an absolute stereoselectivity in the epoxidation of eicosapentaenoic acid (EPA) producing the 17(R),18(S) enantiomer. May play an important role in all-trans retinoic acid biosynthesis in extrahepatic tissues. Catalyzes two successive oxidative transformation of all-trans retinol to all-trans retinal and then to the active form all-trans retinoic acid. May also participate in eicosanoids metabolism by converting hydroperoxide species into oxo metabolites (lipoxygenase-like reaction, NADPH-independent).</text>
</comment>
<comment type="catalytic activity">
    <reaction evidence="3">
        <text>an organic molecule + reduced [NADPH--hemoprotein reductase] + O2 = an alcohol + oxidized [NADPH--hemoprotein reductase] + H2O + H(+)</text>
        <dbReference type="Rhea" id="RHEA:17149"/>
        <dbReference type="Rhea" id="RHEA-COMP:11964"/>
        <dbReference type="Rhea" id="RHEA-COMP:11965"/>
        <dbReference type="ChEBI" id="CHEBI:15377"/>
        <dbReference type="ChEBI" id="CHEBI:15378"/>
        <dbReference type="ChEBI" id="CHEBI:15379"/>
        <dbReference type="ChEBI" id="CHEBI:30879"/>
        <dbReference type="ChEBI" id="CHEBI:57618"/>
        <dbReference type="ChEBI" id="CHEBI:58210"/>
        <dbReference type="ChEBI" id="CHEBI:142491"/>
        <dbReference type="EC" id="1.14.14.1"/>
    </reaction>
    <physiologicalReaction direction="right-to-left" evidence="3">
        <dbReference type="Rhea" id="RHEA:17151"/>
    </physiologicalReaction>
</comment>
<comment type="catalytic activity">
    <reaction evidence="3">
        <text>estrone + reduced [NADPH--hemoprotein reductase] + O2 = 2-hydroxyestrone + oxidized [NADPH--hemoprotein reductase] + H2O + H(+)</text>
        <dbReference type="Rhea" id="RHEA:47208"/>
        <dbReference type="Rhea" id="RHEA-COMP:11964"/>
        <dbReference type="Rhea" id="RHEA-COMP:11965"/>
        <dbReference type="ChEBI" id="CHEBI:1156"/>
        <dbReference type="ChEBI" id="CHEBI:15377"/>
        <dbReference type="ChEBI" id="CHEBI:15378"/>
        <dbReference type="ChEBI" id="CHEBI:15379"/>
        <dbReference type="ChEBI" id="CHEBI:17263"/>
        <dbReference type="ChEBI" id="CHEBI:57618"/>
        <dbReference type="ChEBI" id="CHEBI:58210"/>
    </reaction>
    <physiologicalReaction direction="left-to-right" evidence="3">
        <dbReference type="Rhea" id="RHEA:47209"/>
    </physiologicalReaction>
</comment>
<comment type="catalytic activity">
    <reaction evidence="3">
        <text>estrone + reduced [NADPH--hemoprotein reductase] + O2 = 4-hydroxyestrone + oxidized [NADPH--hemoprotein reductase] + H2O + H(+)</text>
        <dbReference type="Rhea" id="RHEA:47292"/>
        <dbReference type="Rhea" id="RHEA-COMP:11964"/>
        <dbReference type="Rhea" id="RHEA-COMP:11965"/>
        <dbReference type="ChEBI" id="CHEBI:15377"/>
        <dbReference type="ChEBI" id="CHEBI:15378"/>
        <dbReference type="ChEBI" id="CHEBI:15379"/>
        <dbReference type="ChEBI" id="CHEBI:17263"/>
        <dbReference type="ChEBI" id="CHEBI:57618"/>
        <dbReference type="ChEBI" id="CHEBI:58210"/>
        <dbReference type="ChEBI" id="CHEBI:87602"/>
    </reaction>
    <physiologicalReaction direction="left-to-right" evidence="3">
        <dbReference type="Rhea" id="RHEA:47293"/>
    </physiologicalReaction>
</comment>
<comment type="catalytic activity">
    <reaction evidence="3">
        <text>estrone + reduced [NADPH--hemoprotein reductase] + O2 = 6alpha-hydroxyestrone + oxidized [NADPH--hemoprotein reductase] + H2O + H(+)</text>
        <dbReference type="Rhea" id="RHEA:47308"/>
        <dbReference type="Rhea" id="RHEA-COMP:11964"/>
        <dbReference type="Rhea" id="RHEA-COMP:11965"/>
        <dbReference type="ChEBI" id="CHEBI:15377"/>
        <dbReference type="ChEBI" id="CHEBI:15378"/>
        <dbReference type="ChEBI" id="CHEBI:15379"/>
        <dbReference type="ChEBI" id="CHEBI:17263"/>
        <dbReference type="ChEBI" id="CHEBI:57618"/>
        <dbReference type="ChEBI" id="CHEBI:58210"/>
        <dbReference type="ChEBI" id="CHEBI:87605"/>
    </reaction>
    <physiologicalReaction direction="left-to-right" evidence="3">
        <dbReference type="Rhea" id="RHEA:47309"/>
    </physiologicalReaction>
</comment>
<comment type="catalytic activity">
    <reaction evidence="3">
        <text>estrone + reduced [NADPH--hemoprotein reductase] + O2 = 15alpha-hydroxyestrone + oxidized [NADPH--hemoprotein reductase] + H2O + H(+)</text>
        <dbReference type="Rhea" id="RHEA:47312"/>
        <dbReference type="Rhea" id="RHEA-COMP:11964"/>
        <dbReference type="Rhea" id="RHEA-COMP:11965"/>
        <dbReference type="ChEBI" id="CHEBI:15377"/>
        <dbReference type="ChEBI" id="CHEBI:15378"/>
        <dbReference type="ChEBI" id="CHEBI:15379"/>
        <dbReference type="ChEBI" id="CHEBI:17263"/>
        <dbReference type="ChEBI" id="CHEBI:57618"/>
        <dbReference type="ChEBI" id="CHEBI:58210"/>
        <dbReference type="ChEBI" id="CHEBI:87618"/>
    </reaction>
    <physiologicalReaction direction="left-to-right" evidence="3">
        <dbReference type="Rhea" id="RHEA:47313"/>
    </physiologicalReaction>
</comment>
<comment type="catalytic activity">
    <reaction evidence="3">
        <text>estrone + reduced [NADPH--hemoprotein reductase] + O2 = 16alpha-hydroxyestrone + oxidized [NADPH--hemoprotein reductase] + H2O + H(+)</text>
        <dbReference type="Rhea" id="RHEA:47204"/>
        <dbReference type="Rhea" id="RHEA-COMP:11964"/>
        <dbReference type="Rhea" id="RHEA-COMP:11965"/>
        <dbReference type="ChEBI" id="CHEBI:776"/>
        <dbReference type="ChEBI" id="CHEBI:15377"/>
        <dbReference type="ChEBI" id="CHEBI:15378"/>
        <dbReference type="ChEBI" id="CHEBI:15379"/>
        <dbReference type="ChEBI" id="CHEBI:17263"/>
        <dbReference type="ChEBI" id="CHEBI:57618"/>
        <dbReference type="ChEBI" id="CHEBI:58210"/>
    </reaction>
    <physiologicalReaction direction="left-to-right" evidence="3">
        <dbReference type="Rhea" id="RHEA:47205"/>
    </physiologicalReaction>
</comment>
<comment type="catalytic activity">
    <reaction evidence="3">
        <text>17beta-estradiol + reduced [NADPH--hemoprotein reductase] + O2 = 2-hydroxy-17beta-estradiol + oxidized [NADPH--hemoprotein reductase] + H2O + H(+)</text>
        <dbReference type="Rhea" id="RHEA:47212"/>
        <dbReference type="Rhea" id="RHEA-COMP:11964"/>
        <dbReference type="Rhea" id="RHEA-COMP:11965"/>
        <dbReference type="ChEBI" id="CHEBI:15377"/>
        <dbReference type="ChEBI" id="CHEBI:15378"/>
        <dbReference type="ChEBI" id="CHEBI:15379"/>
        <dbReference type="ChEBI" id="CHEBI:16469"/>
        <dbReference type="ChEBI" id="CHEBI:28744"/>
        <dbReference type="ChEBI" id="CHEBI:57618"/>
        <dbReference type="ChEBI" id="CHEBI:58210"/>
    </reaction>
    <physiologicalReaction direction="left-to-right" evidence="3">
        <dbReference type="Rhea" id="RHEA:47213"/>
    </physiologicalReaction>
</comment>
<comment type="catalytic activity">
    <reaction evidence="3">
        <text>17beta-estradiol + reduced [NADPH--hemoprotein reductase] + O2 = 4-hydroxy-17beta-estradiol + oxidized [NADPH--hemoprotein reductase] + H2O + H(+)</text>
        <dbReference type="Rhea" id="RHEA:47280"/>
        <dbReference type="Rhea" id="RHEA-COMP:11964"/>
        <dbReference type="Rhea" id="RHEA-COMP:11965"/>
        <dbReference type="ChEBI" id="CHEBI:15377"/>
        <dbReference type="ChEBI" id="CHEBI:15378"/>
        <dbReference type="ChEBI" id="CHEBI:15379"/>
        <dbReference type="ChEBI" id="CHEBI:16469"/>
        <dbReference type="ChEBI" id="CHEBI:57618"/>
        <dbReference type="ChEBI" id="CHEBI:58210"/>
        <dbReference type="ChEBI" id="CHEBI:62845"/>
    </reaction>
    <physiologicalReaction direction="left-to-right" evidence="3">
        <dbReference type="Rhea" id="RHEA:47281"/>
    </physiologicalReaction>
</comment>
<comment type="catalytic activity">
    <reaction evidence="3">
        <text>17beta-estradiol + reduced [NADPH--hemoprotein reductase] + O2 = 6alpha-hydroxy-17beta-estradiol + oxidized [NADPH--hemoprotein reductase] + H2O + H(+)</text>
        <dbReference type="Rhea" id="RHEA:47284"/>
        <dbReference type="Rhea" id="RHEA-COMP:11964"/>
        <dbReference type="Rhea" id="RHEA-COMP:11965"/>
        <dbReference type="ChEBI" id="CHEBI:15377"/>
        <dbReference type="ChEBI" id="CHEBI:15378"/>
        <dbReference type="ChEBI" id="CHEBI:15379"/>
        <dbReference type="ChEBI" id="CHEBI:16469"/>
        <dbReference type="ChEBI" id="CHEBI:57618"/>
        <dbReference type="ChEBI" id="CHEBI:58210"/>
        <dbReference type="ChEBI" id="CHEBI:62847"/>
    </reaction>
    <physiologicalReaction direction="left-to-right" evidence="3">
        <dbReference type="Rhea" id="RHEA:47285"/>
    </physiologicalReaction>
</comment>
<comment type="catalytic activity">
    <reaction evidence="3">
        <text>17beta-estradiol + reduced [NADPH--hemoprotein reductase] + O2 = 7alpha-hydroxy-17beta-estradiol + oxidized [NADPH--hemoprotein reductase] + H2O + H(+)</text>
        <dbReference type="Rhea" id="RHEA:47288"/>
        <dbReference type="Rhea" id="RHEA-COMP:11964"/>
        <dbReference type="Rhea" id="RHEA-COMP:11965"/>
        <dbReference type="ChEBI" id="CHEBI:15377"/>
        <dbReference type="ChEBI" id="CHEBI:15378"/>
        <dbReference type="ChEBI" id="CHEBI:15379"/>
        <dbReference type="ChEBI" id="CHEBI:16469"/>
        <dbReference type="ChEBI" id="CHEBI:57618"/>
        <dbReference type="ChEBI" id="CHEBI:58210"/>
        <dbReference type="ChEBI" id="CHEBI:87598"/>
    </reaction>
    <physiologicalReaction direction="left-to-right" evidence="3">
        <dbReference type="Rhea" id="RHEA:47289"/>
    </physiologicalReaction>
</comment>
<comment type="catalytic activity">
    <reaction evidence="3">
        <text>17beta-estradiol + reduced [NADPH--hemoprotein reductase] + O2 = 15alpha-hydroxy-17beta-estradiol + oxidized [NADPH--hemoprotein reductase] + H2O + H(+)</text>
        <dbReference type="Rhea" id="RHEA:47276"/>
        <dbReference type="Rhea" id="RHEA-COMP:11964"/>
        <dbReference type="Rhea" id="RHEA-COMP:11965"/>
        <dbReference type="ChEBI" id="CHEBI:15377"/>
        <dbReference type="ChEBI" id="CHEBI:15378"/>
        <dbReference type="ChEBI" id="CHEBI:15379"/>
        <dbReference type="ChEBI" id="CHEBI:16469"/>
        <dbReference type="ChEBI" id="CHEBI:57618"/>
        <dbReference type="ChEBI" id="CHEBI:58210"/>
        <dbReference type="ChEBI" id="CHEBI:87593"/>
    </reaction>
    <physiologicalReaction direction="left-to-right" evidence="3">
        <dbReference type="Rhea" id="RHEA:47277"/>
    </physiologicalReaction>
</comment>
<comment type="catalytic activity">
    <reaction evidence="3">
        <text>(5Z,8Z,11Z)-eicosatrienoate + reduced [NADPH--hemoprotein reductase] + O2 = 19-hydroxy-(5Z,8Z,11Z)-eicosatrienoate + oxidized [NADPH--hemoprotein reductase] + H2O + H(+)</text>
        <dbReference type="Rhea" id="RHEA:50076"/>
        <dbReference type="Rhea" id="RHEA-COMP:11964"/>
        <dbReference type="Rhea" id="RHEA-COMP:11965"/>
        <dbReference type="ChEBI" id="CHEBI:15377"/>
        <dbReference type="ChEBI" id="CHEBI:15378"/>
        <dbReference type="ChEBI" id="CHEBI:15379"/>
        <dbReference type="ChEBI" id="CHEBI:57618"/>
        <dbReference type="ChEBI" id="CHEBI:58210"/>
        <dbReference type="ChEBI" id="CHEBI:78043"/>
        <dbReference type="ChEBI" id="CHEBI:132024"/>
    </reaction>
    <physiologicalReaction direction="left-to-right" evidence="3">
        <dbReference type="Rhea" id="RHEA:50077"/>
    </physiologicalReaction>
</comment>
<comment type="catalytic activity">
    <reaction evidence="3">
        <text>(5Z,8Z,11Z,14Z)-eicosatetraenoate + reduced [NADPH--hemoprotein reductase] + O2 = 16-hydroxy-(5Z,8Z,11Z,14Z)-eicosatetraenoate + oxidized [NADPH--hemoprotein reductase] + H2O + H(+)</text>
        <dbReference type="Rhea" id="RHEA:49972"/>
        <dbReference type="Rhea" id="RHEA-COMP:11964"/>
        <dbReference type="Rhea" id="RHEA-COMP:11965"/>
        <dbReference type="ChEBI" id="CHEBI:15377"/>
        <dbReference type="ChEBI" id="CHEBI:15378"/>
        <dbReference type="ChEBI" id="CHEBI:15379"/>
        <dbReference type="ChEBI" id="CHEBI:32395"/>
        <dbReference type="ChEBI" id="CHEBI:57618"/>
        <dbReference type="ChEBI" id="CHEBI:58210"/>
        <dbReference type="ChEBI" id="CHEBI:132019"/>
    </reaction>
    <physiologicalReaction direction="left-to-right" evidence="3">
        <dbReference type="Rhea" id="RHEA:49973"/>
    </physiologicalReaction>
</comment>
<comment type="catalytic activity">
    <reaction evidence="3">
        <text>(5Z,8Z,11Z,14Z)-eicosatetraenoate + reduced [NADPH--hemoprotein reductase] + O2 = 17-hydroxy-(5Z,8Z,11Z,14Z)-eicosatetraenoate + oxidized [NADPH--hemoprotein reductase] + H2O + H(+)</text>
        <dbReference type="Rhea" id="RHEA:49968"/>
        <dbReference type="Rhea" id="RHEA-COMP:11964"/>
        <dbReference type="Rhea" id="RHEA-COMP:11965"/>
        <dbReference type="ChEBI" id="CHEBI:15377"/>
        <dbReference type="ChEBI" id="CHEBI:15378"/>
        <dbReference type="ChEBI" id="CHEBI:15379"/>
        <dbReference type="ChEBI" id="CHEBI:32395"/>
        <dbReference type="ChEBI" id="CHEBI:57618"/>
        <dbReference type="ChEBI" id="CHEBI:58210"/>
        <dbReference type="ChEBI" id="CHEBI:132016"/>
    </reaction>
    <physiologicalReaction direction="left-to-right" evidence="3">
        <dbReference type="Rhea" id="RHEA:49969"/>
    </physiologicalReaction>
</comment>
<comment type="catalytic activity">
    <reaction evidence="3">
        <text>(5Z,8Z,11Z,14Z)-eicosatetraenoate + reduced [NADPH--hemoprotein reductase] + O2 = 18-hydroxy-(5Z,8Z,11Z,14Z)-eicosatetraenoate + oxidized [NADPH--hemoprotein reductase] + H2O + H(+)</text>
        <dbReference type="Rhea" id="RHEA:39811"/>
        <dbReference type="Rhea" id="RHEA-COMP:11964"/>
        <dbReference type="Rhea" id="RHEA-COMP:11965"/>
        <dbReference type="ChEBI" id="CHEBI:15377"/>
        <dbReference type="ChEBI" id="CHEBI:15378"/>
        <dbReference type="ChEBI" id="CHEBI:15379"/>
        <dbReference type="ChEBI" id="CHEBI:32395"/>
        <dbReference type="ChEBI" id="CHEBI:57618"/>
        <dbReference type="ChEBI" id="CHEBI:58210"/>
        <dbReference type="ChEBI" id="CHEBI:63590"/>
    </reaction>
    <physiologicalReaction direction="left-to-right" evidence="3">
        <dbReference type="Rhea" id="RHEA:39812"/>
    </physiologicalReaction>
</comment>
<comment type="catalytic activity">
    <reaction evidence="3">
        <text>(5Z,8Z,11Z,14Z)-eicosatetraenoate + reduced [NADPH--hemoprotein reductase] + O2 = 19-hydroxy-(5Z,8Z,11Z,14Z)-eicosatetraenoate + oxidized [NADPH--hemoprotein reductase] + H2O + H(+)</text>
        <dbReference type="Rhea" id="RHEA:39759"/>
        <dbReference type="Rhea" id="RHEA-COMP:11964"/>
        <dbReference type="Rhea" id="RHEA-COMP:11965"/>
        <dbReference type="ChEBI" id="CHEBI:15377"/>
        <dbReference type="ChEBI" id="CHEBI:15378"/>
        <dbReference type="ChEBI" id="CHEBI:15379"/>
        <dbReference type="ChEBI" id="CHEBI:32395"/>
        <dbReference type="ChEBI" id="CHEBI:57618"/>
        <dbReference type="ChEBI" id="CHEBI:58210"/>
        <dbReference type="ChEBI" id="CHEBI:76627"/>
    </reaction>
    <physiologicalReaction direction="left-to-right" evidence="3">
        <dbReference type="Rhea" id="RHEA:39760"/>
    </physiologicalReaction>
</comment>
<comment type="catalytic activity">
    <reaction evidence="3">
        <text>(5Z,8Z,11Z,14Z,17Z)-eicosapentaenoate + reduced [NADPH--hemoprotein reductase] + O2 = 19-hydroxy-(5Z,8Z,11Z,14Z,17Z)-eicosapentaenoate + oxidized [NADPH--hemoprotein reductase] + H2O + H(+)</text>
        <dbReference type="Rhea" id="RHEA:39787"/>
        <dbReference type="Rhea" id="RHEA-COMP:11964"/>
        <dbReference type="Rhea" id="RHEA-COMP:11965"/>
        <dbReference type="ChEBI" id="CHEBI:15377"/>
        <dbReference type="ChEBI" id="CHEBI:15378"/>
        <dbReference type="ChEBI" id="CHEBI:15379"/>
        <dbReference type="ChEBI" id="CHEBI:57618"/>
        <dbReference type="ChEBI" id="CHEBI:58210"/>
        <dbReference type="ChEBI" id="CHEBI:58562"/>
        <dbReference type="ChEBI" id="CHEBI:76636"/>
    </reaction>
    <physiologicalReaction direction="left-to-right" evidence="3">
        <dbReference type="Rhea" id="RHEA:39788"/>
    </physiologicalReaction>
</comment>
<comment type="catalytic activity">
    <reaction evidence="3">
        <text>(5Z,8Z,11Z,14Z)-eicosatetraenoate + reduced [NADPH--hemoprotein reductase] + O2 = (8R,9S)-epoxy-(5Z,11Z,14Z)-eicosatrienoate + oxidized [NADPH--hemoprotein reductase] + H2O + H(+)</text>
        <dbReference type="Rhea" id="RHEA:49884"/>
        <dbReference type="Rhea" id="RHEA-COMP:11964"/>
        <dbReference type="Rhea" id="RHEA-COMP:11965"/>
        <dbReference type="ChEBI" id="CHEBI:15377"/>
        <dbReference type="ChEBI" id="CHEBI:15378"/>
        <dbReference type="ChEBI" id="CHEBI:15379"/>
        <dbReference type="ChEBI" id="CHEBI:32395"/>
        <dbReference type="ChEBI" id="CHEBI:57618"/>
        <dbReference type="ChEBI" id="CHEBI:58210"/>
        <dbReference type="ChEBI" id="CHEBI:131975"/>
    </reaction>
    <physiologicalReaction direction="left-to-right" evidence="3">
        <dbReference type="Rhea" id="RHEA:49885"/>
    </physiologicalReaction>
</comment>
<comment type="catalytic activity">
    <reaction evidence="3">
        <text>(5Z,8Z,11Z,14Z)-eicosatetraenoate + reduced [NADPH--hemoprotein reductase] + O2 = (11R,12S)-epoxy-(5Z,8Z,14Z)-eicosatrienoate + oxidized [NADPH--hemoprotein reductase] + H2O + H(+)</text>
        <dbReference type="Rhea" id="RHEA:49880"/>
        <dbReference type="Rhea" id="RHEA-COMP:11964"/>
        <dbReference type="Rhea" id="RHEA-COMP:11965"/>
        <dbReference type="ChEBI" id="CHEBI:15377"/>
        <dbReference type="ChEBI" id="CHEBI:15378"/>
        <dbReference type="ChEBI" id="CHEBI:15379"/>
        <dbReference type="ChEBI" id="CHEBI:32395"/>
        <dbReference type="ChEBI" id="CHEBI:57618"/>
        <dbReference type="ChEBI" id="CHEBI:58210"/>
        <dbReference type="ChEBI" id="CHEBI:131970"/>
    </reaction>
    <physiologicalReaction direction="left-to-right" evidence="3">
        <dbReference type="Rhea" id="RHEA:49881"/>
    </physiologicalReaction>
</comment>
<comment type="catalytic activity">
    <reaction evidence="3">
        <text>(5Z,8Z,11Z,14Z)-eicosatetraenoate + reduced [NADPH--hemoprotein reductase] + O2 = (14S,15R)-epoxy-(5Z,8Z,11Z)-eicosatrienoate + oxidized [NADPH--hemoprotein reductase] + H2O + H(+)</text>
        <dbReference type="Rhea" id="RHEA:49856"/>
        <dbReference type="Rhea" id="RHEA-COMP:11964"/>
        <dbReference type="Rhea" id="RHEA-COMP:11965"/>
        <dbReference type="ChEBI" id="CHEBI:15377"/>
        <dbReference type="ChEBI" id="CHEBI:15378"/>
        <dbReference type="ChEBI" id="CHEBI:15379"/>
        <dbReference type="ChEBI" id="CHEBI:32395"/>
        <dbReference type="ChEBI" id="CHEBI:57618"/>
        <dbReference type="ChEBI" id="CHEBI:58210"/>
        <dbReference type="ChEBI" id="CHEBI:131964"/>
    </reaction>
    <physiologicalReaction direction="left-to-right" evidence="3">
        <dbReference type="Rhea" id="RHEA:49857"/>
    </physiologicalReaction>
</comment>
<comment type="catalytic activity">
    <reaction evidence="3">
        <text>(5Z,8Z,11Z,14Z)-eicosatetraenoate + reduced [NADPH--hemoprotein reductase] + O2 = (14R,15S)-epoxy-(5Z,8Z,11Z)-eicosatrienoate + oxidized [NADPH--hemoprotein reductase] + H2O + H(+)</text>
        <dbReference type="Rhea" id="RHEA:49860"/>
        <dbReference type="Rhea" id="RHEA-COMP:11964"/>
        <dbReference type="Rhea" id="RHEA-COMP:11965"/>
        <dbReference type="ChEBI" id="CHEBI:15377"/>
        <dbReference type="ChEBI" id="CHEBI:15378"/>
        <dbReference type="ChEBI" id="CHEBI:15379"/>
        <dbReference type="ChEBI" id="CHEBI:32395"/>
        <dbReference type="ChEBI" id="CHEBI:57618"/>
        <dbReference type="ChEBI" id="CHEBI:58210"/>
        <dbReference type="ChEBI" id="CHEBI:131965"/>
    </reaction>
    <physiologicalReaction direction="left-to-right" evidence="3">
        <dbReference type="Rhea" id="RHEA:49861"/>
    </physiologicalReaction>
</comment>
<comment type="catalytic activity">
    <reaction evidence="3">
        <text>(5Z,8Z,11Z,14Z,17Z)-eicosapentaenoate + reduced [NADPH--hemoprotein reductase] + O2 = (17R,18S)-epoxy-(5Z,8Z,11Z,14Z)-eicosatetraenoate + oxidized [NADPH--hemoprotein reductase] + H2O + H(+)</text>
        <dbReference type="Rhea" id="RHEA:39779"/>
        <dbReference type="Rhea" id="RHEA-COMP:11964"/>
        <dbReference type="Rhea" id="RHEA-COMP:11965"/>
        <dbReference type="ChEBI" id="CHEBI:15377"/>
        <dbReference type="ChEBI" id="CHEBI:15378"/>
        <dbReference type="ChEBI" id="CHEBI:15379"/>
        <dbReference type="ChEBI" id="CHEBI:57618"/>
        <dbReference type="ChEBI" id="CHEBI:58210"/>
        <dbReference type="ChEBI" id="CHEBI:58562"/>
        <dbReference type="ChEBI" id="CHEBI:76634"/>
    </reaction>
    <physiologicalReaction direction="left-to-right" evidence="3">
        <dbReference type="Rhea" id="RHEA:39780"/>
    </physiologicalReaction>
</comment>
<comment type="catalytic activity">
    <reaction evidence="3">
        <text>(4Z,7Z,10Z,13Z,16Z,19Z)-docosahexaenoate + reduced [NADPH--hemoprotein reductase] + O2 = (19S,20R)-epoxy-(4Z,7Z,10Z,13Z,16Z)-docosapentaenoate + oxidized [NADPH--hemoprotein reductase] + H2O + H(+)</text>
        <dbReference type="Rhea" id="RHEA:52124"/>
        <dbReference type="Rhea" id="RHEA-COMP:11964"/>
        <dbReference type="Rhea" id="RHEA-COMP:11965"/>
        <dbReference type="ChEBI" id="CHEBI:15377"/>
        <dbReference type="ChEBI" id="CHEBI:15378"/>
        <dbReference type="ChEBI" id="CHEBI:15379"/>
        <dbReference type="ChEBI" id="CHEBI:57618"/>
        <dbReference type="ChEBI" id="CHEBI:58210"/>
        <dbReference type="ChEBI" id="CHEBI:77016"/>
        <dbReference type="ChEBI" id="CHEBI:136411"/>
    </reaction>
    <physiologicalReaction direction="left-to-right" evidence="3">
        <dbReference type="Rhea" id="RHEA:52125"/>
    </physiologicalReaction>
</comment>
<comment type="catalytic activity">
    <reaction evidence="3">
        <text>(4Z,7Z,10Z,13Z,16Z,19Z)-docosahexaenoate + reduced [NADPH--hemoprotein reductase] + O2 = (19R,20S)-epoxy-(4Z,7Z,10Z,13Z,16Z)-docosapentaenoate + oxidized [NADPH--hemoprotein reductase] + H2O + H(+)</text>
        <dbReference type="Rhea" id="RHEA:52120"/>
        <dbReference type="Rhea" id="RHEA-COMP:11964"/>
        <dbReference type="Rhea" id="RHEA-COMP:11965"/>
        <dbReference type="ChEBI" id="CHEBI:15377"/>
        <dbReference type="ChEBI" id="CHEBI:15378"/>
        <dbReference type="ChEBI" id="CHEBI:15379"/>
        <dbReference type="ChEBI" id="CHEBI:57618"/>
        <dbReference type="ChEBI" id="CHEBI:58210"/>
        <dbReference type="ChEBI" id="CHEBI:77016"/>
        <dbReference type="ChEBI" id="CHEBI:136410"/>
    </reaction>
    <physiologicalReaction direction="left-to-right" evidence="3">
        <dbReference type="Rhea" id="RHEA:52121"/>
    </physiologicalReaction>
</comment>
<comment type="catalytic activity">
    <reaction evidence="3">
        <text>all-trans-retinol + reduced [NADPH--hemoprotein reductase] + O2 = all-trans-retinal + oxidized [NADPH--hemoprotein reductase] + 2 H2O + H(+)</text>
        <dbReference type="Rhea" id="RHEA:42092"/>
        <dbReference type="Rhea" id="RHEA-COMP:11964"/>
        <dbReference type="Rhea" id="RHEA-COMP:11965"/>
        <dbReference type="ChEBI" id="CHEBI:15377"/>
        <dbReference type="ChEBI" id="CHEBI:15378"/>
        <dbReference type="ChEBI" id="CHEBI:15379"/>
        <dbReference type="ChEBI" id="CHEBI:17336"/>
        <dbReference type="ChEBI" id="CHEBI:17898"/>
        <dbReference type="ChEBI" id="CHEBI:57618"/>
        <dbReference type="ChEBI" id="CHEBI:58210"/>
    </reaction>
    <physiologicalReaction direction="left-to-right" evidence="3">
        <dbReference type="Rhea" id="RHEA:42093"/>
    </physiologicalReaction>
</comment>
<comment type="catalytic activity">
    <reaction evidence="3">
        <text>all-trans-retinal + reduced [NADPH--hemoprotein reductase] + O2 = all-trans-retinoate + oxidized [NADPH--hemoprotein reductase] + H2O + 2 H(+)</text>
        <dbReference type="Rhea" id="RHEA:42088"/>
        <dbReference type="Rhea" id="RHEA-COMP:11964"/>
        <dbReference type="Rhea" id="RHEA-COMP:11965"/>
        <dbReference type="ChEBI" id="CHEBI:15377"/>
        <dbReference type="ChEBI" id="CHEBI:15378"/>
        <dbReference type="ChEBI" id="CHEBI:15379"/>
        <dbReference type="ChEBI" id="CHEBI:17898"/>
        <dbReference type="ChEBI" id="CHEBI:35291"/>
        <dbReference type="ChEBI" id="CHEBI:57618"/>
        <dbReference type="ChEBI" id="CHEBI:58210"/>
    </reaction>
    <physiologicalReaction direction="left-to-right" evidence="3">
        <dbReference type="Rhea" id="RHEA:42089"/>
    </physiologicalReaction>
</comment>
<comment type="catalytic activity">
    <reaction evidence="3">
        <text>(13S)-hydroperoxy-(9Z,11E)-octadecadienoate = 13-oxo-(9Z,11E)-octadecadienoate + H2O</text>
        <dbReference type="Rhea" id="RHEA:48716"/>
        <dbReference type="ChEBI" id="CHEBI:15377"/>
        <dbReference type="ChEBI" id="CHEBI:57466"/>
        <dbReference type="ChEBI" id="CHEBI:90781"/>
    </reaction>
    <physiologicalReaction direction="left-to-right" evidence="3">
        <dbReference type="Rhea" id="RHEA:48717"/>
    </physiologicalReaction>
</comment>
<comment type="catalytic activity">
    <reaction evidence="3">
        <text>(12S)-hydroperoxy-(5Z,8Z,10E,14Z)-eicosatetraenoate = 12-oxo-(5Z,8Z,10E,14Z)-eicosatetraenoate + H2O</text>
        <dbReference type="Rhea" id="RHEA:37947"/>
        <dbReference type="ChEBI" id="CHEBI:15377"/>
        <dbReference type="ChEBI" id="CHEBI:57444"/>
        <dbReference type="ChEBI" id="CHEBI:75231"/>
        <dbReference type="EC" id="4.2.1.152"/>
    </reaction>
    <physiologicalReaction direction="left-to-right" evidence="3">
        <dbReference type="Rhea" id="RHEA:37948"/>
    </physiologicalReaction>
</comment>
<comment type="catalytic activity">
    <reaction evidence="3">
        <text>(15S)-hydroperoxy-(5Z,8Z,11Z,13E)-eicosatetraenoate = 15-oxo-(5Z,8Z,11Z,13E)-eicosatetraenoate + H2O</text>
        <dbReference type="Rhea" id="RHEA:48636"/>
        <dbReference type="ChEBI" id="CHEBI:15377"/>
        <dbReference type="ChEBI" id="CHEBI:57410"/>
        <dbReference type="ChEBI" id="CHEBI:57446"/>
    </reaction>
    <physiologicalReaction direction="left-to-right" evidence="3">
        <dbReference type="Rhea" id="RHEA:48637"/>
    </physiologicalReaction>
</comment>
<comment type="catalytic activity">
    <reaction evidence="3">
        <text>(5S)-hydroperoxy-(6E,8Z,11Z,14Z)-eicosatetraenoate = 5-oxo-(6E,8Z,11Z,14Z)-eicosatetraenoate + H2O</text>
        <dbReference type="Rhea" id="RHEA:48632"/>
        <dbReference type="ChEBI" id="CHEBI:15377"/>
        <dbReference type="ChEBI" id="CHEBI:57450"/>
        <dbReference type="ChEBI" id="CHEBI:65342"/>
    </reaction>
    <physiologicalReaction direction="left-to-right" evidence="3">
        <dbReference type="Rhea" id="RHEA:48633"/>
    </physiologicalReaction>
</comment>
<comment type="cofactor">
    <cofactor evidence="1">
        <name>heme</name>
        <dbReference type="ChEBI" id="CHEBI:30413"/>
    </cofactor>
</comment>
<comment type="pathway">
    <text evidence="3">Steroid hormone biosynthesis.</text>
</comment>
<comment type="pathway">
    <text evidence="3">Lipid metabolism; fatty acid metabolism.</text>
</comment>
<comment type="pathway">
    <text evidence="3">Cofactor metabolism; retinol metabolism.</text>
</comment>
<comment type="subunit">
    <text evidence="2">Interacts with cytosolic chaperones HSP70 and HSP90; this interaction is required for initial targeting to mitochondria. Interacts (via mitochondrial targeting signal) with TOMM40 (via N-terminus); this interaction is required for translocation across the mitochondrial outer membrane.</text>
</comment>
<comment type="subcellular location">
    <subcellularLocation>
        <location evidence="2">Endoplasmic reticulum membrane</location>
        <topology evidence="2">Peripheral membrane protein</topology>
    </subcellularLocation>
    <subcellularLocation>
        <location evidence="2">Mitochondrion inner membrane</location>
        <topology evidence="2">Peripheral membrane protein</topology>
    </subcellularLocation>
    <subcellularLocation>
        <location evidence="2">Microsome membrane</location>
        <topology evidence="2">Peripheral membrane protein</topology>
    </subcellularLocation>
    <subcellularLocation>
        <location evidence="2">Cytoplasm</location>
    </subcellularLocation>
</comment>
<comment type="similarity">
    <text evidence="4">Belongs to the cytochrome P450 family.</text>
</comment>